<gene>
    <name type="primary">ligB</name>
    <name type="synonym">yoqV</name>
    <name type="ordered locus">BSU20500</name>
</gene>
<feature type="chain" id="PRO_0000360515" description="SPbeta prophage-derived DNA ligase-like protein LigB">
    <location>
        <begin position="1"/>
        <end position="270"/>
    </location>
</feature>
<feature type="active site" description="N6-AMP-lysine intermediate" evidence="1">
    <location>
        <position position="25"/>
    </location>
</feature>
<comment type="similarity">
    <text evidence="2">Belongs to the ATP-dependent DNA ligase family.</text>
</comment>
<organism>
    <name type="scientific">Bacillus subtilis (strain 168)</name>
    <dbReference type="NCBI Taxonomy" id="224308"/>
    <lineage>
        <taxon>Bacteria</taxon>
        <taxon>Bacillati</taxon>
        <taxon>Bacillota</taxon>
        <taxon>Bacilli</taxon>
        <taxon>Bacillales</taxon>
        <taxon>Bacillaceae</taxon>
        <taxon>Bacillus</taxon>
    </lineage>
</organism>
<keyword id="KW-0067">ATP-binding</keyword>
<keyword id="KW-0436">Ligase</keyword>
<keyword id="KW-0547">Nucleotide-binding</keyword>
<keyword id="KW-1185">Reference proteome</keyword>
<accession>O31917</accession>
<proteinExistence type="inferred from homology"/>
<sequence length="270" mass="31027">MFVSPMLLHSIKEPFNDENYITELKFDGIRLILSKFDNQIKLYTRHNNEVTSKFPELMDLDIPDGTVLDGEVIVAASGGAPDFEAVMERFMSKKSAHNIVYCVFDVIYKDGQSIAAKPLTERKTVLNSLELDHPNVFVIEGTQGNGLAYFNLAKEKNLEGIVIKKANSPYEINKRSHNWLKVINYDYTEVLITGYTKKDIKFLLSYPDGTSAGFMEFMPHAERTKFHSMKQVKSESDEYVFIEPILCNVKHRFKTKHGKLRIPSFESWRV</sequence>
<evidence type="ECO:0000250" key="1"/>
<evidence type="ECO:0000305" key="2"/>
<name>LIGB_BACSU</name>
<protein>
    <recommendedName>
        <fullName>SPbeta prophage-derived DNA ligase-like protein LigB</fullName>
    </recommendedName>
</protein>
<reference key="1">
    <citation type="journal article" date="1997" name="Nature">
        <title>The complete genome sequence of the Gram-positive bacterium Bacillus subtilis.</title>
        <authorList>
            <person name="Kunst F."/>
            <person name="Ogasawara N."/>
            <person name="Moszer I."/>
            <person name="Albertini A.M."/>
            <person name="Alloni G."/>
            <person name="Azevedo V."/>
            <person name="Bertero M.G."/>
            <person name="Bessieres P."/>
            <person name="Bolotin A."/>
            <person name="Borchert S."/>
            <person name="Borriss R."/>
            <person name="Boursier L."/>
            <person name="Brans A."/>
            <person name="Braun M."/>
            <person name="Brignell S.C."/>
            <person name="Bron S."/>
            <person name="Brouillet S."/>
            <person name="Bruschi C.V."/>
            <person name="Caldwell B."/>
            <person name="Capuano V."/>
            <person name="Carter N.M."/>
            <person name="Choi S.-K."/>
            <person name="Codani J.-J."/>
            <person name="Connerton I.F."/>
            <person name="Cummings N.J."/>
            <person name="Daniel R.A."/>
            <person name="Denizot F."/>
            <person name="Devine K.M."/>
            <person name="Duesterhoeft A."/>
            <person name="Ehrlich S.D."/>
            <person name="Emmerson P.T."/>
            <person name="Entian K.-D."/>
            <person name="Errington J."/>
            <person name="Fabret C."/>
            <person name="Ferrari E."/>
            <person name="Foulger D."/>
            <person name="Fritz C."/>
            <person name="Fujita M."/>
            <person name="Fujita Y."/>
            <person name="Fuma S."/>
            <person name="Galizzi A."/>
            <person name="Galleron N."/>
            <person name="Ghim S.-Y."/>
            <person name="Glaser P."/>
            <person name="Goffeau A."/>
            <person name="Golightly E.J."/>
            <person name="Grandi G."/>
            <person name="Guiseppi G."/>
            <person name="Guy B.J."/>
            <person name="Haga K."/>
            <person name="Haiech J."/>
            <person name="Harwood C.R."/>
            <person name="Henaut A."/>
            <person name="Hilbert H."/>
            <person name="Holsappel S."/>
            <person name="Hosono S."/>
            <person name="Hullo M.-F."/>
            <person name="Itaya M."/>
            <person name="Jones L.-M."/>
            <person name="Joris B."/>
            <person name="Karamata D."/>
            <person name="Kasahara Y."/>
            <person name="Klaerr-Blanchard M."/>
            <person name="Klein C."/>
            <person name="Kobayashi Y."/>
            <person name="Koetter P."/>
            <person name="Koningstein G."/>
            <person name="Krogh S."/>
            <person name="Kumano M."/>
            <person name="Kurita K."/>
            <person name="Lapidus A."/>
            <person name="Lardinois S."/>
            <person name="Lauber J."/>
            <person name="Lazarevic V."/>
            <person name="Lee S.-M."/>
            <person name="Levine A."/>
            <person name="Liu H."/>
            <person name="Masuda S."/>
            <person name="Mauel C."/>
            <person name="Medigue C."/>
            <person name="Medina N."/>
            <person name="Mellado R.P."/>
            <person name="Mizuno M."/>
            <person name="Moestl D."/>
            <person name="Nakai S."/>
            <person name="Noback M."/>
            <person name="Noone D."/>
            <person name="O'Reilly M."/>
            <person name="Ogawa K."/>
            <person name="Ogiwara A."/>
            <person name="Oudega B."/>
            <person name="Park S.-H."/>
            <person name="Parro V."/>
            <person name="Pohl T.M."/>
            <person name="Portetelle D."/>
            <person name="Porwollik S."/>
            <person name="Prescott A.M."/>
            <person name="Presecan E."/>
            <person name="Pujic P."/>
            <person name="Purnelle B."/>
            <person name="Rapoport G."/>
            <person name="Rey M."/>
            <person name="Reynolds S."/>
            <person name="Rieger M."/>
            <person name="Rivolta C."/>
            <person name="Rocha E."/>
            <person name="Roche B."/>
            <person name="Rose M."/>
            <person name="Sadaie Y."/>
            <person name="Sato T."/>
            <person name="Scanlan E."/>
            <person name="Schleich S."/>
            <person name="Schroeter R."/>
            <person name="Scoffone F."/>
            <person name="Sekiguchi J."/>
            <person name="Sekowska A."/>
            <person name="Seror S.J."/>
            <person name="Serror P."/>
            <person name="Shin B.-S."/>
            <person name="Soldo B."/>
            <person name="Sorokin A."/>
            <person name="Tacconi E."/>
            <person name="Takagi T."/>
            <person name="Takahashi H."/>
            <person name="Takemaru K."/>
            <person name="Takeuchi M."/>
            <person name="Tamakoshi A."/>
            <person name="Tanaka T."/>
            <person name="Terpstra P."/>
            <person name="Tognoni A."/>
            <person name="Tosato V."/>
            <person name="Uchiyama S."/>
            <person name="Vandenbol M."/>
            <person name="Vannier F."/>
            <person name="Vassarotti A."/>
            <person name="Viari A."/>
            <person name="Wambutt R."/>
            <person name="Wedler E."/>
            <person name="Wedler H."/>
            <person name="Weitzenegger T."/>
            <person name="Winters P."/>
            <person name="Wipat A."/>
            <person name="Yamamoto H."/>
            <person name="Yamane K."/>
            <person name="Yasumoto K."/>
            <person name="Yata K."/>
            <person name="Yoshida K."/>
            <person name="Yoshikawa H.-F."/>
            <person name="Zumstein E."/>
            <person name="Yoshikawa H."/>
            <person name="Danchin A."/>
        </authorList>
    </citation>
    <scope>NUCLEOTIDE SEQUENCE [LARGE SCALE GENOMIC DNA]</scope>
    <source>
        <strain>168</strain>
    </source>
</reference>
<dbReference type="EMBL" id="AL009126">
    <property type="protein sequence ID" value="CAB13942.1"/>
    <property type="molecule type" value="Genomic_DNA"/>
</dbReference>
<dbReference type="RefSeq" id="NP_389932.1">
    <property type="nucleotide sequence ID" value="NC_000964.3"/>
</dbReference>
<dbReference type="RefSeq" id="WP_004399261.1">
    <property type="nucleotide sequence ID" value="NZ_OZ025638.1"/>
</dbReference>
<dbReference type="SMR" id="O31917"/>
<dbReference type="FunCoup" id="O31917">
    <property type="interactions" value="41"/>
</dbReference>
<dbReference type="STRING" id="224308.BSU20500"/>
<dbReference type="PaxDb" id="224308-BSU20500"/>
<dbReference type="DNASU" id="939992"/>
<dbReference type="EnsemblBacteria" id="CAB13942">
    <property type="protein sequence ID" value="CAB13942"/>
    <property type="gene ID" value="BSU_20500"/>
</dbReference>
<dbReference type="GeneID" id="939992"/>
<dbReference type="KEGG" id="bsu:BSU20500"/>
<dbReference type="PATRIC" id="fig|224308.179.peg.2240"/>
<dbReference type="eggNOG" id="COG1793">
    <property type="taxonomic scope" value="Bacteria"/>
</dbReference>
<dbReference type="InParanoid" id="O31917"/>
<dbReference type="OrthoDB" id="5503604at2"/>
<dbReference type="PhylomeDB" id="O31917"/>
<dbReference type="BioCyc" id="BSUB:BSU20500-MONOMER"/>
<dbReference type="Proteomes" id="UP000001570">
    <property type="component" value="Chromosome"/>
</dbReference>
<dbReference type="GO" id="GO:0005524">
    <property type="term" value="F:ATP binding"/>
    <property type="evidence" value="ECO:0007669"/>
    <property type="project" value="UniProtKB-KW"/>
</dbReference>
<dbReference type="GO" id="GO:0003910">
    <property type="term" value="F:DNA ligase (ATP) activity"/>
    <property type="evidence" value="ECO:0007669"/>
    <property type="project" value="InterPro"/>
</dbReference>
<dbReference type="GO" id="GO:0006310">
    <property type="term" value="P:DNA recombination"/>
    <property type="evidence" value="ECO:0007669"/>
    <property type="project" value="InterPro"/>
</dbReference>
<dbReference type="GO" id="GO:0006281">
    <property type="term" value="P:DNA repair"/>
    <property type="evidence" value="ECO:0007669"/>
    <property type="project" value="InterPro"/>
</dbReference>
<dbReference type="CDD" id="cd07906">
    <property type="entry name" value="Adenylation_DNA_ligase_LigD_LigC"/>
    <property type="match status" value="1"/>
</dbReference>
<dbReference type="Gene3D" id="3.30.1490.70">
    <property type="match status" value="1"/>
</dbReference>
<dbReference type="Gene3D" id="3.30.470.30">
    <property type="entry name" value="DNA ligase/mRNA capping enzyme"/>
    <property type="match status" value="1"/>
</dbReference>
<dbReference type="InterPro" id="IPR050191">
    <property type="entry name" value="ATP-dep_DNA_ligase"/>
</dbReference>
<dbReference type="InterPro" id="IPR012310">
    <property type="entry name" value="DNA_ligase_ATP-dep_cent"/>
</dbReference>
<dbReference type="NCBIfam" id="NF005796">
    <property type="entry name" value="PRK07636.1"/>
    <property type="match status" value="1"/>
</dbReference>
<dbReference type="PANTHER" id="PTHR45674:SF4">
    <property type="entry name" value="DNA LIGASE 1"/>
    <property type="match status" value="1"/>
</dbReference>
<dbReference type="PANTHER" id="PTHR45674">
    <property type="entry name" value="DNA LIGASE 1/3 FAMILY MEMBER"/>
    <property type="match status" value="1"/>
</dbReference>
<dbReference type="Pfam" id="PF01068">
    <property type="entry name" value="DNA_ligase_A_M"/>
    <property type="match status" value="1"/>
</dbReference>
<dbReference type="SUPFAM" id="SSF56091">
    <property type="entry name" value="DNA ligase/mRNA capping enzyme, catalytic domain"/>
    <property type="match status" value="1"/>
</dbReference>
<dbReference type="PROSITE" id="PS50160">
    <property type="entry name" value="DNA_LIGASE_A3"/>
    <property type="match status" value="1"/>
</dbReference>